<keyword id="KW-0963">Cytoplasm</keyword>
<keyword id="KW-0489">Methyltransferase</keyword>
<keyword id="KW-0698">rRNA processing</keyword>
<keyword id="KW-0949">S-adenosyl-L-methionine</keyword>
<keyword id="KW-0808">Transferase</keyword>
<comment type="function">
    <text evidence="1">Specifically methylates the N4 position of cytidine in position 1402 (C1402) of 16S rRNA.</text>
</comment>
<comment type="catalytic activity">
    <reaction evidence="1">
        <text>cytidine(1402) in 16S rRNA + S-adenosyl-L-methionine = N(4)-methylcytidine(1402) in 16S rRNA + S-adenosyl-L-homocysteine + H(+)</text>
        <dbReference type="Rhea" id="RHEA:42928"/>
        <dbReference type="Rhea" id="RHEA-COMP:10286"/>
        <dbReference type="Rhea" id="RHEA-COMP:10287"/>
        <dbReference type="ChEBI" id="CHEBI:15378"/>
        <dbReference type="ChEBI" id="CHEBI:57856"/>
        <dbReference type="ChEBI" id="CHEBI:59789"/>
        <dbReference type="ChEBI" id="CHEBI:74506"/>
        <dbReference type="ChEBI" id="CHEBI:82748"/>
        <dbReference type="EC" id="2.1.1.199"/>
    </reaction>
</comment>
<comment type="subcellular location">
    <subcellularLocation>
        <location evidence="1">Cytoplasm</location>
    </subcellularLocation>
</comment>
<comment type="similarity">
    <text evidence="1">Belongs to the methyltransferase superfamily. RsmH family.</text>
</comment>
<gene>
    <name evidence="1" type="primary">rsmH</name>
    <name type="synonym">mraW</name>
    <name type="ordered locus">BR1439</name>
    <name type="ordered locus">BS1330_I1433</name>
</gene>
<evidence type="ECO:0000255" key="1">
    <source>
        <dbReference type="HAMAP-Rule" id="MF_01007"/>
    </source>
</evidence>
<evidence type="ECO:0000256" key="2">
    <source>
        <dbReference type="SAM" id="MobiDB-lite"/>
    </source>
</evidence>
<organism>
    <name type="scientific">Brucella suis biovar 1 (strain 1330)</name>
    <dbReference type="NCBI Taxonomy" id="204722"/>
    <lineage>
        <taxon>Bacteria</taxon>
        <taxon>Pseudomonadati</taxon>
        <taxon>Pseudomonadota</taxon>
        <taxon>Alphaproteobacteria</taxon>
        <taxon>Hyphomicrobiales</taxon>
        <taxon>Brucellaceae</taxon>
        <taxon>Brucella/Ochrobactrum group</taxon>
        <taxon>Brucella</taxon>
    </lineage>
</organism>
<dbReference type="EC" id="2.1.1.199" evidence="1"/>
<dbReference type="EMBL" id="AE014291">
    <property type="protein sequence ID" value="AAN30352.1"/>
    <property type="molecule type" value="Genomic_DNA"/>
</dbReference>
<dbReference type="EMBL" id="CP002997">
    <property type="protein sequence ID" value="AEM18768.1"/>
    <property type="molecule type" value="Genomic_DNA"/>
</dbReference>
<dbReference type="SMR" id="P65428"/>
<dbReference type="KEGG" id="bms:BR1439"/>
<dbReference type="KEGG" id="bsi:BS1330_I1433"/>
<dbReference type="HOGENOM" id="CLU_038422_1_1_5"/>
<dbReference type="Proteomes" id="UP000007104">
    <property type="component" value="Chromosome I"/>
</dbReference>
<dbReference type="GO" id="GO:0005737">
    <property type="term" value="C:cytoplasm"/>
    <property type="evidence" value="ECO:0007669"/>
    <property type="project" value="UniProtKB-SubCell"/>
</dbReference>
<dbReference type="GO" id="GO:0071424">
    <property type="term" value="F:rRNA (cytosine-N4-)-methyltransferase activity"/>
    <property type="evidence" value="ECO:0007669"/>
    <property type="project" value="UniProtKB-UniRule"/>
</dbReference>
<dbReference type="GO" id="GO:0070475">
    <property type="term" value="P:rRNA base methylation"/>
    <property type="evidence" value="ECO:0007669"/>
    <property type="project" value="UniProtKB-UniRule"/>
</dbReference>
<dbReference type="CDD" id="cd02440">
    <property type="entry name" value="AdoMet_MTases"/>
    <property type="match status" value="1"/>
</dbReference>
<dbReference type="Gene3D" id="1.10.150.170">
    <property type="entry name" value="Putative methyltransferase TM0872, insert domain"/>
    <property type="match status" value="1"/>
</dbReference>
<dbReference type="Gene3D" id="3.40.50.150">
    <property type="entry name" value="Vaccinia Virus protein VP39"/>
    <property type="match status" value="1"/>
</dbReference>
<dbReference type="HAMAP" id="MF_01007">
    <property type="entry name" value="16SrRNA_methyltr_H"/>
    <property type="match status" value="1"/>
</dbReference>
<dbReference type="InterPro" id="IPR002903">
    <property type="entry name" value="RsmH"/>
</dbReference>
<dbReference type="InterPro" id="IPR023397">
    <property type="entry name" value="SAM-dep_MeTrfase_MraW_recog"/>
</dbReference>
<dbReference type="InterPro" id="IPR029063">
    <property type="entry name" value="SAM-dependent_MTases_sf"/>
</dbReference>
<dbReference type="NCBIfam" id="TIGR00006">
    <property type="entry name" value="16S rRNA (cytosine(1402)-N(4))-methyltransferase RsmH"/>
    <property type="match status" value="1"/>
</dbReference>
<dbReference type="PANTHER" id="PTHR11265:SF0">
    <property type="entry name" value="12S RRNA N4-METHYLCYTIDINE METHYLTRANSFERASE"/>
    <property type="match status" value="1"/>
</dbReference>
<dbReference type="PANTHER" id="PTHR11265">
    <property type="entry name" value="S-ADENOSYL-METHYLTRANSFERASE MRAW"/>
    <property type="match status" value="1"/>
</dbReference>
<dbReference type="Pfam" id="PF01795">
    <property type="entry name" value="Methyltransf_5"/>
    <property type="match status" value="1"/>
</dbReference>
<dbReference type="PIRSF" id="PIRSF004486">
    <property type="entry name" value="MraW"/>
    <property type="match status" value="1"/>
</dbReference>
<dbReference type="SUPFAM" id="SSF81799">
    <property type="entry name" value="Putative methyltransferase TM0872, insert domain"/>
    <property type="match status" value="1"/>
</dbReference>
<dbReference type="SUPFAM" id="SSF53335">
    <property type="entry name" value="S-adenosyl-L-methionine-dependent methyltransferases"/>
    <property type="match status" value="1"/>
</dbReference>
<feature type="chain" id="PRO_0000108592" description="Ribosomal RNA small subunit methyltransferase H">
    <location>
        <begin position="1"/>
        <end position="346"/>
    </location>
</feature>
<feature type="region of interest" description="Disordered" evidence="2">
    <location>
        <begin position="270"/>
        <end position="346"/>
    </location>
</feature>
<feature type="binding site" evidence="1">
    <location>
        <begin position="46"/>
        <end position="48"/>
    </location>
    <ligand>
        <name>S-adenosyl-L-methionine</name>
        <dbReference type="ChEBI" id="CHEBI:59789"/>
    </ligand>
</feature>
<feature type="binding site" evidence="1">
    <location>
        <position position="63"/>
    </location>
    <ligand>
        <name>S-adenosyl-L-methionine</name>
        <dbReference type="ChEBI" id="CHEBI:59789"/>
    </ligand>
</feature>
<feature type="binding site" evidence="1">
    <location>
        <position position="90"/>
    </location>
    <ligand>
        <name>S-adenosyl-L-methionine</name>
        <dbReference type="ChEBI" id="CHEBI:59789"/>
    </ligand>
</feature>
<feature type="binding site" evidence="1">
    <location>
        <position position="113"/>
    </location>
    <ligand>
        <name>S-adenosyl-L-methionine</name>
        <dbReference type="ChEBI" id="CHEBI:59789"/>
    </ligand>
</feature>
<feature type="binding site" evidence="1">
    <location>
        <position position="120"/>
    </location>
    <ligand>
        <name>S-adenosyl-L-methionine</name>
        <dbReference type="ChEBI" id="CHEBI:59789"/>
    </ligand>
</feature>
<sequence length="346" mass="37502">MASLGGDNSQAEGAEVRHVPVLIAEVIDALKPAPGAVIVDGTFGAGGYTRRILETGADVIAIDRDPTAIEAGRAMEKEFPGRLNLVESRFSALDEAVARMSGAGKKVDGVVLDIGVSSMQIDEAERGFSFQKDGPLDMRMSSRGPSAADAVNRLKTGDLARIFNFLGEERHAGRIARMIEKRRAAKPFTRTLDLANAIETLVGRNPKDRIHPATRVFQALRVYVNDELGELARALLAAERILKPGGRLVVVTFHSLEDRMVKRFFADRAGGSAGSRHMPETHMRLPSFTPAVKGAVGPTPEEEERNPRARSAKLRAGIRTENPPLEDDLSLFGLPKLPETNELARS</sequence>
<reference key="1">
    <citation type="journal article" date="2002" name="Proc. Natl. Acad. Sci. U.S.A.">
        <title>The Brucella suis genome reveals fundamental similarities between animal and plant pathogens and symbionts.</title>
        <authorList>
            <person name="Paulsen I.T."/>
            <person name="Seshadri R."/>
            <person name="Nelson K.E."/>
            <person name="Eisen J.A."/>
            <person name="Heidelberg J.F."/>
            <person name="Read T.D."/>
            <person name="Dodson R.J."/>
            <person name="Umayam L.A."/>
            <person name="Brinkac L.M."/>
            <person name="Beanan M.J."/>
            <person name="Daugherty S.C."/>
            <person name="DeBoy R.T."/>
            <person name="Durkin A.S."/>
            <person name="Kolonay J.F."/>
            <person name="Madupu R."/>
            <person name="Nelson W.C."/>
            <person name="Ayodeji B."/>
            <person name="Kraul M."/>
            <person name="Shetty J."/>
            <person name="Malek J.A."/>
            <person name="Van Aken S.E."/>
            <person name="Riedmuller S."/>
            <person name="Tettelin H."/>
            <person name="Gill S.R."/>
            <person name="White O."/>
            <person name="Salzberg S.L."/>
            <person name="Hoover D.L."/>
            <person name="Lindler L.E."/>
            <person name="Halling S.M."/>
            <person name="Boyle S.M."/>
            <person name="Fraser C.M."/>
        </authorList>
    </citation>
    <scope>NUCLEOTIDE SEQUENCE [LARGE SCALE GENOMIC DNA]</scope>
    <source>
        <strain>1330</strain>
    </source>
</reference>
<reference key="2">
    <citation type="journal article" date="2011" name="J. Bacteriol.">
        <title>Revised genome sequence of Brucella suis 1330.</title>
        <authorList>
            <person name="Tae H."/>
            <person name="Shallom S."/>
            <person name="Settlage R."/>
            <person name="Preston D."/>
            <person name="Adams L.G."/>
            <person name="Garner H.R."/>
        </authorList>
    </citation>
    <scope>NUCLEOTIDE SEQUENCE [LARGE SCALE GENOMIC DNA]</scope>
    <source>
        <strain>1330</strain>
    </source>
</reference>
<protein>
    <recommendedName>
        <fullName evidence="1">Ribosomal RNA small subunit methyltransferase H</fullName>
        <ecNumber evidence="1">2.1.1.199</ecNumber>
    </recommendedName>
    <alternativeName>
        <fullName evidence="1">16S rRNA m(4)C1402 methyltransferase</fullName>
    </alternativeName>
    <alternativeName>
        <fullName evidence="1">rRNA (cytosine-N(4)-)-methyltransferase RsmH</fullName>
    </alternativeName>
</protein>
<accession>P65428</accession>
<accession>G0KBJ9</accession>
<accession>Q8YI74</accession>
<proteinExistence type="inferred from homology"/>
<name>RSMH_BRUSU</name>